<accession>A1JP02</accession>
<organism>
    <name type="scientific">Yersinia enterocolitica serotype O:8 / biotype 1B (strain NCTC 13174 / 8081)</name>
    <dbReference type="NCBI Taxonomy" id="393305"/>
    <lineage>
        <taxon>Bacteria</taxon>
        <taxon>Pseudomonadati</taxon>
        <taxon>Pseudomonadota</taxon>
        <taxon>Gammaproteobacteria</taxon>
        <taxon>Enterobacterales</taxon>
        <taxon>Yersiniaceae</taxon>
        <taxon>Yersinia</taxon>
    </lineage>
</organism>
<feature type="chain" id="PRO_1000009103" description="Phosphoheptose isomerase">
    <location>
        <begin position="1"/>
        <end position="193"/>
    </location>
</feature>
<feature type="domain" description="SIS" evidence="1">
    <location>
        <begin position="37"/>
        <end position="193"/>
    </location>
</feature>
<feature type="binding site" evidence="1">
    <location>
        <begin position="52"/>
        <end position="54"/>
    </location>
    <ligand>
        <name>substrate</name>
    </ligand>
</feature>
<feature type="binding site" evidence="1">
    <location>
        <position position="61"/>
    </location>
    <ligand>
        <name>Zn(2+)</name>
        <dbReference type="ChEBI" id="CHEBI:29105"/>
    </ligand>
</feature>
<feature type="binding site" evidence="1">
    <location>
        <position position="65"/>
    </location>
    <ligand>
        <name>substrate</name>
    </ligand>
</feature>
<feature type="binding site" evidence="1">
    <location>
        <position position="65"/>
    </location>
    <ligand>
        <name>Zn(2+)</name>
        <dbReference type="ChEBI" id="CHEBI:29105"/>
    </ligand>
</feature>
<feature type="binding site" evidence="1">
    <location>
        <begin position="93"/>
        <end position="94"/>
    </location>
    <ligand>
        <name>substrate</name>
    </ligand>
</feature>
<feature type="binding site" evidence="1">
    <location>
        <begin position="119"/>
        <end position="121"/>
    </location>
    <ligand>
        <name>substrate</name>
    </ligand>
</feature>
<feature type="binding site" evidence="1">
    <location>
        <position position="124"/>
    </location>
    <ligand>
        <name>substrate</name>
    </ligand>
</feature>
<feature type="binding site" evidence="1">
    <location>
        <position position="172"/>
    </location>
    <ligand>
        <name>substrate</name>
    </ligand>
</feature>
<feature type="binding site" evidence="1">
    <location>
        <position position="172"/>
    </location>
    <ligand>
        <name>Zn(2+)</name>
        <dbReference type="ChEBI" id="CHEBI:29105"/>
    </ligand>
</feature>
<feature type="binding site" evidence="1">
    <location>
        <position position="180"/>
    </location>
    <ligand>
        <name>Zn(2+)</name>
        <dbReference type="ChEBI" id="CHEBI:29105"/>
    </ligand>
</feature>
<gene>
    <name evidence="1" type="primary">gmhA</name>
    <name type="ordered locus">YE3223</name>
</gene>
<evidence type="ECO:0000255" key="1">
    <source>
        <dbReference type="HAMAP-Rule" id="MF_00067"/>
    </source>
</evidence>
<proteinExistence type="inferred from homology"/>
<protein>
    <recommendedName>
        <fullName evidence="1">Phosphoheptose isomerase</fullName>
        <ecNumber evidence="1">5.3.1.28</ecNumber>
    </recommendedName>
    <alternativeName>
        <fullName evidence="1">Sedoheptulose 7-phosphate isomerase</fullName>
    </alternativeName>
</protein>
<comment type="function">
    <text evidence="1">Catalyzes the isomerization of sedoheptulose 7-phosphate in D-glycero-D-manno-heptose 7-phosphate.</text>
</comment>
<comment type="catalytic activity">
    <reaction evidence="1">
        <text>2 D-sedoheptulose 7-phosphate = D-glycero-alpha-D-manno-heptose 7-phosphate + D-glycero-beta-D-manno-heptose 7-phosphate</text>
        <dbReference type="Rhea" id="RHEA:27489"/>
        <dbReference type="ChEBI" id="CHEBI:57483"/>
        <dbReference type="ChEBI" id="CHEBI:60203"/>
        <dbReference type="ChEBI" id="CHEBI:60204"/>
        <dbReference type="EC" id="5.3.1.28"/>
    </reaction>
</comment>
<comment type="cofactor">
    <cofactor evidence="1">
        <name>Zn(2+)</name>
        <dbReference type="ChEBI" id="CHEBI:29105"/>
    </cofactor>
    <text evidence="1">Binds 1 zinc ion per subunit.</text>
</comment>
<comment type="pathway">
    <text evidence="1">Carbohydrate biosynthesis; D-glycero-D-manno-heptose 7-phosphate biosynthesis; D-glycero-alpha-D-manno-heptose 7-phosphate and D-glycero-beta-D-manno-heptose 7-phosphate from sedoheptulose 7-phosphate: step 1/1.</text>
</comment>
<comment type="subunit">
    <text evidence="1">Homotetramer.</text>
</comment>
<comment type="subcellular location">
    <subcellularLocation>
        <location evidence="1">Cytoplasm</location>
    </subcellularLocation>
</comment>
<comment type="miscellaneous">
    <text evidence="1">The reaction produces a racemic mixture of D-glycero-alpha-D-manno-heptose 7-phosphate and D-glycero-beta-D-manno-heptose 7-phosphate.</text>
</comment>
<comment type="similarity">
    <text evidence="1">Belongs to the SIS family. GmhA subfamily.</text>
</comment>
<sequence>MYHDLIRSELNEAADTLANFLKDDDNINAIQRAAVLLADSFKAGGKVLSCGNGGSHCDAMHFAEELTGRYRENRPGYPAIAISDVSHISCVSNDFGYDYIFSRYVEAVGREGDVLLGISTSGNSGNIIKAIEAARAKGMKVITLTGKDGGKMAGSADIEIRVPHFGYADRIQEIHIKVIHILIQLIEKEMVKA</sequence>
<keyword id="KW-0119">Carbohydrate metabolism</keyword>
<keyword id="KW-0963">Cytoplasm</keyword>
<keyword id="KW-0413">Isomerase</keyword>
<keyword id="KW-0479">Metal-binding</keyword>
<keyword id="KW-0862">Zinc</keyword>
<reference key="1">
    <citation type="journal article" date="2006" name="PLoS Genet.">
        <title>The complete genome sequence and comparative genome analysis of the high pathogenicity Yersinia enterocolitica strain 8081.</title>
        <authorList>
            <person name="Thomson N.R."/>
            <person name="Howard S."/>
            <person name="Wren B.W."/>
            <person name="Holden M.T.G."/>
            <person name="Crossman L."/>
            <person name="Challis G.L."/>
            <person name="Churcher C."/>
            <person name="Mungall K."/>
            <person name="Brooks K."/>
            <person name="Chillingworth T."/>
            <person name="Feltwell T."/>
            <person name="Abdellah Z."/>
            <person name="Hauser H."/>
            <person name="Jagels K."/>
            <person name="Maddison M."/>
            <person name="Moule S."/>
            <person name="Sanders M."/>
            <person name="Whitehead S."/>
            <person name="Quail M.A."/>
            <person name="Dougan G."/>
            <person name="Parkhill J."/>
            <person name="Prentice M.B."/>
        </authorList>
    </citation>
    <scope>NUCLEOTIDE SEQUENCE [LARGE SCALE GENOMIC DNA]</scope>
    <source>
        <strain>NCTC 13174 / 8081</strain>
    </source>
</reference>
<name>GMHA_YERE8</name>
<dbReference type="EC" id="5.3.1.28" evidence="1"/>
<dbReference type="EMBL" id="AM286415">
    <property type="protein sequence ID" value="CAL13255.1"/>
    <property type="molecule type" value="Genomic_DNA"/>
</dbReference>
<dbReference type="RefSeq" id="YP_001007399.1">
    <property type="nucleotide sequence ID" value="NC_008800.1"/>
</dbReference>
<dbReference type="SMR" id="A1JP02"/>
<dbReference type="KEGG" id="yen:YE3223"/>
<dbReference type="PATRIC" id="fig|393305.7.peg.3427"/>
<dbReference type="eggNOG" id="COG0279">
    <property type="taxonomic scope" value="Bacteria"/>
</dbReference>
<dbReference type="HOGENOM" id="CLU_080999_4_0_6"/>
<dbReference type="OrthoDB" id="9810929at2"/>
<dbReference type="UniPathway" id="UPA00041">
    <property type="reaction ID" value="UER00436"/>
</dbReference>
<dbReference type="Proteomes" id="UP000000642">
    <property type="component" value="Chromosome"/>
</dbReference>
<dbReference type="GO" id="GO:0005737">
    <property type="term" value="C:cytoplasm"/>
    <property type="evidence" value="ECO:0007669"/>
    <property type="project" value="UniProtKB-SubCell"/>
</dbReference>
<dbReference type="GO" id="GO:0097367">
    <property type="term" value="F:carbohydrate derivative binding"/>
    <property type="evidence" value="ECO:0007669"/>
    <property type="project" value="InterPro"/>
</dbReference>
<dbReference type="GO" id="GO:0008968">
    <property type="term" value="F:D-sedoheptulose 7-phosphate isomerase activity"/>
    <property type="evidence" value="ECO:0007669"/>
    <property type="project" value="UniProtKB-UniRule"/>
</dbReference>
<dbReference type="GO" id="GO:0008270">
    <property type="term" value="F:zinc ion binding"/>
    <property type="evidence" value="ECO:0007669"/>
    <property type="project" value="UniProtKB-UniRule"/>
</dbReference>
<dbReference type="GO" id="GO:0005975">
    <property type="term" value="P:carbohydrate metabolic process"/>
    <property type="evidence" value="ECO:0007669"/>
    <property type="project" value="UniProtKB-UniRule"/>
</dbReference>
<dbReference type="GO" id="GO:2001061">
    <property type="term" value="P:D-glycero-D-manno-heptose 7-phosphate biosynthetic process"/>
    <property type="evidence" value="ECO:0007669"/>
    <property type="project" value="UniProtKB-UniPathway"/>
</dbReference>
<dbReference type="CDD" id="cd05006">
    <property type="entry name" value="SIS_GmhA"/>
    <property type="match status" value="1"/>
</dbReference>
<dbReference type="FunFam" id="3.40.50.10490:FF:000013">
    <property type="entry name" value="Phosphoheptose isomerase"/>
    <property type="match status" value="1"/>
</dbReference>
<dbReference type="Gene3D" id="3.40.50.10490">
    <property type="entry name" value="Glucose-6-phosphate isomerase like protein, domain 1"/>
    <property type="match status" value="1"/>
</dbReference>
<dbReference type="HAMAP" id="MF_00067">
    <property type="entry name" value="GmhA"/>
    <property type="match status" value="1"/>
</dbReference>
<dbReference type="InterPro" id="IPR035461">
    <property type="entry name" value="GmhA/DiaA"/>
</dbReference>
<dbReference type="InterPro" id="IPR004515">
    <property type="entry name" value="Phosphoheptose_Isoase"/>
</dbReference>
<dbReference type="InterPro" id="IPR001347">
    <property type="entry name" value="SIS_dom"/>
</dbReference>
<dbReference type="InterPro" id="IPR046348">
    <property type="entry name" value="SIS_dom_sf"/>
</dbReference>
<dbReference type="InterPro" id="IPR050099">
    <property type="entry name" value="SIS_GmhA/DiaA_subfam"/>
</dbReference>
<dbReference type="NCBIfam" id="TIGR00441">
    <property type="entry name" value="gmhA"/>
    <property type="match status" value="1"/>
</dbReference>
<dbReference type="NCBIfam" id="NF001628">
    <property type="entry name" value="PRK00414.1"/>
    <property type="match status" value="1"/>
</dbReference>
<dbReference type="PANTHER" id="PTHR30390:SF7">
    <property type="entry name" value="PHOSPHOHEPTOSE ISOMERASE"/>
    <property type="match status" value="1"/>
</dbReference>
<dbReference type="PANTHER" id="PTHR30390">
    <property type="entry name" value="SEDOHEPTULOSE 7-PHOSPHATE ISOMERASE / DNAA INITIATOR-ASSOCIATING FACTOR FOR REPLICATION INITIATION"/>
    <property type="match status" value="1"/>
</dbReference>
<dbReference type="Pfam" id="PF13580">
    <property type="entry name" value="SIS_2"/>
    <property type="match status" value="1"/>
</dbReference>
<dbReference type="SUPFAM" id="SSF53697">
    <property type="entry name" value="SIS domain"/>
    <property type="match status" value="1"/>
</dbReference>
<dbReference type="PROSITE" id="PS51464">
    <property type="entry name" value="SIS"/>
    <property type="match status" value="1"/>
</dbReference>